<feature type="chain" id="PRO_0000207504" description="7-dehydrocholesterol reductase">
    <location>
        <begin position="1"/>
        <end position="471"/>
    </location>
</feature>
<feature type="transmembrane region" description="Helical" evidence="4">
    <location>
        <begin position="36"/>
        <end position="56"/>
    </location>
</feature>
<feature type="transmembrane region" description="Helical" evidence="4">
    <location>
        <begin position="95"/>
        <end position="115"/>
    </location>
</feature>
<feature type="transmembrane region" description="Helical" evidence="4">
    <location>
        <begin position="144"/>
        <end position="164"/>
    </location>
</feature>
<feature type="transmembrane region" description="Helical" evidence="4">
    <location>
        <begin position="173"/>
        <end position="193"/>
    </location>
</feature>
<feature type="transmembrane region" description="Helical" evidence="4">
    <location>
        <begin position="233"/>
        <end position="253"/>
    </location>
</feature>
<feature type="transmembrane region" description="Helical" evidence="4">
    <location>
        <begin position="262"/>
        <end position="282"/>
    </location>
</feature>
<feature type="transmembrane region" description="Helical" evidence="4">
    <location>
        <begin position="302"/>
        <end position="322"/>
    </location>
</feature>
<feature type="transmembrane region" description="Helical" evidence="4">
    <location>
        <begin position="327"/>
        <end position="347"/>
    </location>
</feature>
<feature type="transmembrane region" description="Helical" evidence="4">
    <location>
        <begin position="416"/>
        <end position="436"/>
    </location>
</feature>
<feature type="binding site" evidence="1">
    <location>
        <position position="354"/>
    </location>
    <ligand>
        <name>NADP(+)</name>
        <dbReference type="ChEBI" id="CHEBI:58349"/>
    </ligand>
</feature>
<feature type="binding site" evidence="1">
    <location>
        <position position="358"/>
    </location>
    <ligand>
        <name>NADP(+)</name>
        <dbReference type="ChEBI" id="CHEBI:58349"/>
    </ligand>
</feature>
<feature type="binding site" evidence="1">
    <location>
        <position position="391"/>
    </location>
    <ligand>
        <name>NADP(+)</name>
        <dbReference type="ChEBI" id="CHEBI:58349"/>
    </ligand>
</feature>
<feature type="binding site" evidence="1">
    <location>
        <position position="396"/>
    </location>
    <ligand>
        <name>NADP(+)</name>
        <dbReference type="ChEBI" id="CHEBI:58349"/>
    </ligand>
</feature>
<feature type="binding site" evidence="1">
    <location>
        <begin position="403"/>
        <end position="404"/>
    </location>
    <ligand>
        <name>NADP(+)</name>
        <dbReference type="ChEBI" id="CHEBI:58349"/>
    </ligand>
</feature>
<feature type="binding site" evidence="1">
    <location>
        <position position="443"/>
    </location>
    <ligand>
        <name>NADP(+)</name>
        <dbReference type="ChEBI" id="CHEBI:58349"/>
    </ligand>
</feature>
<feature type="binding site" evidence="1">
    <location>
        <begin position="447"/>
        <end position="451"/>
    </location>
    <ligand>
        <name>NADP(+)</name>
        <dbReference type="ChEBI" id="CHEBI:58349"/>
    </ligand>
</feature>
<feature type="binding site" evidence="1">
    <location>
        <position position="458"/>
    </location>
    <ligand>
        <name>NADP(+)</name>
        <dbReference type="ChEBI" id="CHEBI:58349"/>
    </ligand>
</feature>
<evidence type="ECO:0000250" key="1">
    <source>
        <dbReference type="UniProtKB" id="G4SW86"/>
    </source>
</evidence>
<evidence type="ECO:0000250" key="2">
    <source>
        <dbReference type="UniProtKB" id="O88455"/>
    </source>
</evidence>
<evidence type="ECO:0000250" key="3">
    <source>
        <dbReference type="UniProtKB" id="Q9UBM7"/>
    </source>
</evidence>
<evidence type="ECO:0000255" key="4"/>
<evidence type="ECO:0000269" key="5">
    <source>
    </source>
</evidence>
<evidence type="ECO:0000303" key="6">
    <source>
    </source>
</evidence>
<evidence type="ECO:0000303" key="7">
    <source ref="1"/>
</evidence>
<evidence type="ECO:0000305" key="8"/>
<evidence type="ECO:0000305" key="9">
    <source>
    </source>
</evidence>
<name>DHCR7_RAT</name>
<accession>Q9Z2Z8</accession>
<dbReference type="EC" id="1.3.1.21" evidence="5"/>
<dbReference type="EC" id="3.3.2.11" evidence="3"/>
<dbReference type="EMBL" id="AB016800">
    <property type="protein sequence ID" value="BAA34306.1"/>
    <property type="molecule type" value="mRNA"/>
</dbReference>
<dbReference type="EMBL" id="AF071500">
    <property type="protein sequence ID" value="AAD31383.1"/>
    <property type="molecule type" value="mRNA"/>
</dbReference>
<dbReference type="EMBL" id="AF272393">
    <property type="protein sequence ID" value="AAM45144.1"/>
    <property type="molecule type" value="mRNA"/>
</dbReference>
<dbReference type="EMBL" id="AF279892">
    <property type="protein sequence ID" value="AAK69490.1"/>
    <property type="molecule type" value="Genomic_DNA"/>
</dbReference>
<dbReference type="EMBL" id="BC081688">
    <property type="protein sequence ID" value="AAH81688.1"/>
    <property type="molecule type" value="mRNA"/>
</dbReference>
<dbReference type="RefSeq" id="NP_071784.1">
    <property type="nucleotide sequence ID" value="NM_022389.3"/>
</dbReference>
<dbReference type="RefSeq" id="XP_006230954.1">
    <property type="nucleotide sequence ID" value="XM_006230892.3"/>
</dbReference>
<dbReference type="RefSeq" id="XP_006230955.1">
    <property type="nucleotide sequence ID" value="XM_006230893.5"/>
</dbReference>
<dbReference type="RefSeq" id="XP_006230956.1">
    <property type="nucleotide sequence ID" value="XM_006230894.5"/>
</dbReference>
<dbReference type="RefSeq" id="XP_008758394.1">
    <property type="nucleotide sequence ID" value="XM_008760172.2"/>
</dbReference>
<dbReference type="RefSeq" id="XP_008758395.1">
    <property type="nucleotide sequence ID" value="XM_008760173.2"/>
</dbReference>
<dbReference type="RefSeq" id="XP_038945428.1">
    <property type="nucleotide sequence ID" value="XM_039089500.2"/>
</dbReference>
<dbReference type="RefSeq" id="XP_063128807.1">
    <property type="nucleotide sequence ID" value="XM_063272737.1"/>
</dbReference>
<dbReference type="RefSeq" id="XP_063128808.1">
    <property type="nucleotide sequence ID" value="XM_063272738.1"/>
</dbReference>
<dbReference type="RefSeq" id="XP_063128809.1">
    <property type="nucleotide sequence ID" value="XM_063272739.1"/>
</dbReference>
<dbReference type="SMR" id="Q9Z2Z8"/>
<dbReference type="FunCoup" id="Q9Z2Z8">
    <property type="interactions" value="454"/>
</dbReference>
<dbReference type="STRING" id="10116.ENSRNOP00000028194"/>
<dbReference type="BindingDB" id="Q9Z2Z8"/>
<dbReference type="ChEMBL" id="CHEMBL4965"/>
<dbReference type="PhosphoSitePlus" id="Q9Z2Z8"/>
<dbReference type="SwissPalm" id="Q9Z2Z8"/>
<dbReference type="jPOST" id="Q9Z2Z8"/>
<dbReference type="PaxDb" id="10116-ENSRNOP00000028194"/>
<dbReference type="Ensembl" id="ENSRNOT00000028195.6">
    <property type="protein sequence ID" value="ENSRNOP00000028194.2"/>
    <property type="gene ID" value="ENSRNOG00000020776.6"/>
</dbReference>
<dbReference type="GeneID" id="64191"/>
<dbReference type="KEGG" id="rno:64191"/>
<dbReference type="UCSC" id="RGD:621769">
    <property type="organism name" value="rat"/>
</dbReference>
<dbReference type="AGR" id="RGD:621769"/>
<dbReference type="CTD" id="1717"/>
<dbReference type="RGD" id="621769">
    <property type="gene designation" value="Dhcr7"/>
</dbReference>
<dbReference type="eggNOG" id="KOG1435">
    <property type="taxonomic scope" value="Eukaryota"/>
</dbReference>
<dbReference type="GeneTree" id="ENSGT00390000000417"/>
<dbReference type="HOGENOM" id="CLU_015631_0_0_1"/>
<dbReference type="InParanoid" id="Q9Z2Z8"/>
<dbReference type="OrthoDB" id="3688at9989"/>
<dbReference type="PhylomeDB" id="Q9Z2Z8"/>
<dbReference type="TreeFam" id="TF101180"/>
<dbReference type="BRENDA" id="1.3.1.21">
    <property type="organism ID" value="5301"/>
</dbReference>
<dbReference type="Reactome" id="R-RNO-6807047">
    <property type="pathway name" value="Cholesterol biosynthesis via desmosterol"/>
</dbReference>
<dbReference type="Reactome" id="R-RNO-6807062">
    <property type="pathway name" value="Cholesterol biosynthesis via lathosterol"/>
</dbReference>
<dbReference type="UniPathway" id="UPA00063"/>
<dbReference type="PRO" id="PR:Q9Z2Z8"/>
<dbReference type="Proteomes" id="UP000002494">
    <property type="component" value="Chromosome 1"/>
</dbReference>
<dbReference type="Bgee" id="ENSRNOG00000020776">
    <property type="expression patterns" value="Expressed in ovary and 20 other cell types or tissues"/>
</dbReference>
<dbReference type="GO" id="GO:0005789">
    <property type="term" value="C:endoplasmic reticulum membrane"/>
    <property type="evidence" value="ECO:0000318"/>
    <property type="project" value="GO_Central"/>
</dbReference>
<dbReference type="GO" id="GO:0005640">
    <property type="term" value="C:nuclear outer membrane"/>
    <property type="evidence" value="ECO:0000266"/>
    <property type="project" value="RGD"/>
</dbReference>
<dbReference type="GO" id="GO:0047598">
    <property type="term" value="F:7-dehydrocholesterol reductase activity"/>
    <property type="evidence" value="ECO:0000315"/>
    <property type="project" value="RGD"/>
</dbReference>
<dbReference type="GO" id="GO:0033963">
    <property type="term" value="F:cholesterol-5,6-oxide hydrolase activity"/>
    <property type="evidence" value="ECO:0000250"/>
    <property type="project" value="UniProtKB"/>
</dbReference>
<dbReference type="GO" id="GO:0050661">
    <property type="term" value="F:NADP binding"/>
    <property type="evidence" value="ECO:0000250"/>
    <property type="project" value="UniProtKB"/>
</dbReference>
<dbReference type="GO" id="GO:0001568">
    <property type="term" value="P:blood vessel development"/>
    <property type="evidence" value="ECO:0000266"/>
    <property type="project" value="RGD"/>
</dbReference>
<dbReference type="GO" id="GO:0006695">
    <property type="term" value="P:cholesterol biosynthetic process"/>
    <property type="evidence" value="ECO:0000314"/>
    <property type="project" value="RGD"/>
</dbReference>
<dbReference type="GO" id="GO:0033490">
    <property type="term" value="P:cholesterol biosynthetic process via lathosterol"/>
    <property type="evidence" value="ECO:0000266"/>
    <property type="project" value="RGD"/>
</dbReference>
<dbReference type="GO" id="GO:0030324">
    <property type="term" value="P:lung development"/>
    <property type="evidence" value="ECO:0000266"/>
    <property type="project" value="RGD"/>
</dbReference>
<dbReference type="GO" id="GO:0060487">
    <property type="term" value="P:lung epithelial cell differentiation"/>
    <property type="evidence" value="ECO:0000266"/>
    <property type="project" value="RGD"/>
</dbReference>
<dbReference type="GO" id="GO:0035264">
    <property type="term" value="P:multicellular organism growth"/>
    <property type="evidence" value="ECO:0000266"/>
    <property type="project" value="RGD"/>
</dbReference>
<dbReference type="GO" id="GO:0160020">
    <property type="term" value="P:positive regulation of ferroptosis"/>
    <property type="evidence" value="ECO:0000266"/>
    <property type="project" value="RGD"/>
</dbReference>
<dbReference type="GO" id="GO:0009791">
    <property type="term" value="P:post-embryonic development"/>
    <property type="evidence" value="ECO:0000266"/>
    <property type="project" value="RGD"/>
</dbReference>
<dbReference type="GO" id="GO:0042127">
    <property type="term" value="P:regulation of cell population proliferation"/>
    <property type="evidence" value="ECO:0000266"/>
    <property type="project" value="RGD"/>
</dbReference>
<dbReference type="GO" id="GO:0045540">
    <property type="term" value="P:regulation of cholesterol biosynthetic process"/>
    <property type="evidence" value="ECO:0000314"/>
    <property type="project" value="RGD"/>
</dbReference>
<dbReference type="GO" id="GO:0016126">
    <property type="term" value="P:sterol biosynthetic process"/>
    <property type="evidence" value="ECO:0000266"/>
    <property type="project" value="RGD"/>
</dbReference>
<dbReference type="FunFam" id="1.20.120.1630:FF:000004">
    <property type="entry name" value="7-dehydrocholesterol reductase"/>
    <property type="match status" value="1"/>
</dbReference>
<dbReference type="Gene3D" id="1.20.120.1630">
    <property type="match status" value="1"/>
</dbReference>
<dbReference type="InterPro" id="IPR001171">
    <property type="entry name" value="ERG24_DHCR-like"/>
</dbReference>
<dbReference type="InterPro" id="IPR018083">
    <property type="entry name" value="Sterol_reductase_CS"/>
</dbReference>
<dbReference type="PANTHER" id="PTHR21257:SF38">
    <property type="entry name" value="7-DEHYDROCHOLESTEROL REDUCTASE"/>
    <property type="match status" value="1"/>
</dbReference>
<dbReference type="PANTHER" id="PTHR21257">
    <property type="entry name" value="DELTA(14)-STEROL REDUCTASE"/>
    <property type="match status" value="1"/>
</dbReference>
<dbReference type="Pfam" id="PF01222">
    <property type="entry name" value="ERG4_ERG24"/>
    <property type="match status" value="1"/>
</dbReference>
<dbReference type="PROSITE" id="PS01017">
    <property type="entry name" value="STEROL_REDUCT_1"/>
    <property type="match status" value="1"/>
</dbReference>
<dbReference type="PROSITE" id="PS01018">
    <property type="entry name" value="STEROL_REDUCT_2"/>
    <property type="match status" value="1"/>
</dbReference>
<proteinExistence type="evidence at protein level"/>
<reference key="1">
    <citation type="submission" date="1998-08" db="EMBL/GenBank/DDBJ databases">
        <title>Transmembrane configuration of sterol delta 7-reductase as a potential sterol sensing protein.</title>
        <authorList>
            <person name="Nishino H."/>
            <person name="Ishibashi T."/>
        </authorList>
    </citation>
    <scope>NUCLEOTIDE SEQUENCE [MRNA]</scope>
    <source>
        <strain>Sprague-Dawley</strain>
        <tissue>Liver</tissue>
    </source>
</reference>
<reference key="2">
    <citation type="journal article" date="1999" name="J. Biol. Chem.">
        <title>Cholesterol biosynthesis from lanosterol. Molecular cloning, tissue distribution, expression, chromosomal localization, and regulation of rat 7-dehydrocholesterol reductase, a Smith-Lemli-Opitz syndrome-related protein.</title>
        <authorList>
            <person name="Bae S.-H."/>
            <person name="Lee J.N."/>
            <person name="Fitzky B.U."/>
            <person name="Seong J."/>
            <person name="Paik Y.-K."/>
        </authorList>
    </citation>
    <scope>NUCLEOTIDE SEQUENCE [MRNA]</scope>
    <scope>CATALYTIC ACTIVITY</scope>
    <scope>FUNCTION</scope>
    <scope>TISSUE SPECIFICITY</scope>
    <source>
        <strain>Sprague-Dawley</strain>
    </source>
</reference>
<reference key="3">
    <citation type="journal article" date="2002" name="Biochim. Biophys. Acta">
        <title>Structure and alternative splicing of the rat 7-dehydrocholesterol reductase gene.</title>
        <authorList>
            <person name="Lee J.-N."/>
            <person name="Bae S.-H."/>
            <person name="Paik Y.-K."/>
        </authorList>
    </citation>
    <scope>NUCLEOTIDE SEQUENCE [GENOMIC DNA / MRNA]</scope>
</reference>
<reference key="4">
    <citation type="journal article" date="2004" name="Genome Res.">
        <title>The status, quality, and expansion of the NIH full-length cDNA project: the Mammalian Gene Collection (MGC).</title>
        <authorList>
            <consortium name="The MGC Project Team"/>
        </authorList>
    </citation>
    <scope>NUCLEOTIDE SEQUENCE [LARGE SCALE MRNA]</scope>
    <source>
        <tissue>Kidney</tissue>
    </source>
</reference>
<organism>
    <name type="scientific">Rattus norvegicus</name>
    <name type="common">Rat</name>
    <dbReference type="NCBI Taxonomy" id="10116"/>
    <lineage>
        <taxon>Eukaryota</taxon>
        <taxon>Metazoa</taxon>
        <taxon>Chordata</taxon>
        <taxon>Craniata</taxon>
        <taxon>Vertebrata</taxon>
        <taxon>Euteleostomi</taxon>
        <taxon>Mammalia</taxon>
        <taxon>Eutheria</taxon>
        <taxon>Euarchontoglires</taxon>
        <taxon>Glires</taxon>
        <taxon>Rodentia</taxon>
        <taxon>Myomorpha</taxon>
        <taxon>Muroidea</taxon>
        <taxon>Muridae</taxon>
        <taxon>Murinae</taxon>
        <taxon>Rattus</taxon>
    </lineage>
</organism>
<sequence>MASKSQHNASKAKNHNVKAESQGQWGRAWEVDWFSLVSVIFLLLFAPFIVYYFIMACDQYSCSLTAPILDVATGRASLADIWAKTPPVTAKAAQLYALWVSFQVLLYSWLPDFCHRFLPGYVGGVQEGAITPAGIVNKYEVNGLQAWLITHFLWFVNAYLLSWFSPTIIFDNWIPLLWCANILGYAVSTFAMIKGYLFPTSAEDCKFTGNFFYNYMMGIEFNPRIGKWFDFKLFFNGRPGIVAWTLINLSFAAKQQELYGHVTNSMILVNVLQAIYVLDFFWNETWYLKTIDICHDHFGWYLGWGDCVWLPYLYTLQGLYLVYHPVQLSTPNALGVLLLGLVGYYIFRMTNHQKDLFRRTDGHCLIWGKKPKAIECSYTSADGLKHRSKLLVSGFWGVARHFNYTGDLMGSLAYCLACGGGHLLPYFYIIYMTILLTHRCLRDEHRCANKYGRDWERYVAAVPYRLLPGIF</sequence>
<keyword id="KW-0152">Cholesterol biosynthesis</keyword>
<keyword id="KW-0153">Cholesterol metabolism</keyword>
<keyword id="KW-0256">Endoplasmic reticulum</keyword>
<keyword id="KW-0378">Hydrolase</keyword>
<keyword id="KW-0444">Lipid biosynthesis</keyword>
<keyword id="KW-0443">Lipid metabolism</keyword>
<keyword id="KW-0472">Membrane</keyword>
<keyword id="KW-0521">NADP</keyword>
<keyword id="KW-0560">Oxidoreductase</keyword>
<keyword id="KW-1185">Reference proteome</keyword>
<keyword id="KW-0752">Steroid biosynthesis</keyword>
<keyword id="KW-0753">Steroid metabolism</keyword>
<keyword id="KW-0756">Sterol biosynthesis</keyword>
<keyword id="KW-1207">Sterol metabolism</keyword>
<keyword id="KW-0812">Transmembrane</keyword>
<keyword id="KW-1133">Transmembrane helix</keyword>
<comment type="function">
    <text evidence="2 3 5">Oxidoreductase that catalyzes the last step of the cholesterol synthesis pathway, which transforms cholesta-5,7-dien-3beta-ol (7-dehydrocholesterol,7-DHC) into cholesterol by reducing the C7-C8 double bond of its sterol core (PubMed:10329655). Can also metabolize cholesta-5,7,24-trien-3beta-ol (7-dehydrodemosterol, 7-DHD) to desmosterol, which is then metabolized by the Delta(24)-sterol reductase (DHCR24) to cholesterol (By similarity). Modulates ferroptosis (a form of regulated cell death driven by iron-dependent lipid peroxidation) through the metabolic breakdown of the anti-ferroptotic metabolites 7-DHC and 7-DHD which, when accumulated, divert the propagation of peroxyl radical-mediated damage from phospholipid components to its sterol core, protecting plasma and mitochondrial membranes from phospholipid autoxidation (By similarity).</text>
</comment>
<comment type="function">
    <text evidence="3">Component of the microsomal antiestrogen binding site (AEBS), a multiproteic complex at the ER membrane that consists of an association between cholestenol Delta-isomerase/EBP and DHCR7. This complex is responsible for cholesterol-5,6-epoxide hydrolase (ChEH) activity, which consists in the hydration of cholesterol-5,6-epoxides (5,6-EC) into cholestane-3beta,5alpha,6beta-triol (CT). The precise role of each component of this complex has not been described yet.</text>
</comment>
<comment type="catalytic activity">
    <reaction evidence="5">
        <text>cholesterol + NADP(+) = 7-dehydrocholesterol + NADPH + H(+)</text>
        <dbReference type="Rhea" id="RHEA:23984"/>
        <dbReference type="ChEBI" id="CHEBI:15378"/>
        <dbReference type="ChEBI" id="CHEBI:16113"/>
        <dbReference type="ChEBI" id="CHEBI:17759"/>
        <dbReference type="ChEBI" id="CHEBI:57783"/>
        <dbReference type="ChEBI" id="CHEBI:58349"/>
        <dbReference type="EC" id="1.3.1.21"/>
    </reaction>
    <physiologicalReaction direction="right-to-left" evidence="9">
        <dbReference type="Rhea" id="RHEA:23986"/>
    </physiologicalReaction>
</comment>
<comment type="catalytic activity">
    <reaction evidence="2">
        <text>7-dehydrodesmosterol + NADPH + H(+) = desmosterol + NADP(+)</text>
        <dbReference type="Rhea" id="RHEA:46740"/>
        <dbReference type="ChEBI" id="CHEBI:15378"/>
        <dbReference type="ChEBI" id="CHEBI:17737"/>
        <dbReference type="ChEBI" id="CHEBI:27910"/>
        <dbReference type="ChEBI" id="CHEBI:57783"/>
        <dbReference type="ChEBI" id="CHEBI:58349"/>
    </reaction>
    <physiologicalReaction direction="left-to-right" evidence="2">
        <dbReference type="Rhea" id="RHEA:46741"/>
    </physiologicalReaction>
</comment>
<comment type="catalytic activity">
    <reaction evidence="3">
        <text>5,6alpha-epoxy-5alpha-cholestan-3beta-ol + H2O = 5alpha-cholestane-3beta,5,6beta-triol</text>
        <dbReference type="Rhea" id="RHEA:11964"/>
        <dbReference type="ChEBI" id="CHEBI:15377"/>
        <dbReference type="ChEBI" id="CHEBI:28082"/>
        <dbReference type="ChEBI" id="CHEBI:49305"/>
        <dbReference type="EC" id="3.3.2.11"/>
    </reaction>
    <physiologicalReaction direction="left-to-right" evidence="3">
        <dbReference type="Rhea" id="RHEA:11965"/>
    </physiologicalReaction>
</comment>
<comment type="catalytic activity">
    <reaction evidence="3">
        <text>5,6beta-epoxy-5beta-cholestan-3beta-ol + H2O = 5alpha-cholestane-3beta,5,6beta-triol</text>
        <dbReference type="Rhea" id="RHEA:15113"/>
        <dbReference type="ChEBI" id="CHEBI:15377"/>
        <dbReference type="ChEBI" id="CHEBI:28082"/>
        <dbReference type="ChEBI" id="CHEBI:28164"/>
        <dbReference type="EC" id="3.3.2.11"/>
    </reaction>
    <physiologicalReaction direction="left-to-right" evidence="3">
        <dbReference type="Rhea" id="RHEA:15114"/>
    </physiologicalReaction>
</comment>
<comment type="pathway">
    <text evidence="5">Steroid biosynthesis; cholesterol biosynthesis.</text>
</comment>
<comment type="subunit">
    <text evidence="3">Interacts with DHCR24; this interaction regulates DHCR7 activity. Interacts with TMEM147.</text>
</comment>
<comment type="subcellular location">
    <subcellularLocation>
        <location evidence="3">Endoplasmic reticulum membrane</location>
        <topology evidence="4">Multi-pass membrane protein</topology>
    </subcellularLocation>
</comment>
<comment type="tissue specificity">
    <text evidence="5">Highest expression is detected in liver, followed by kidney and brain.</text>
</comment>
<comment type="similarity">
    <text evidence="8">Belongs to the ERG4/ERG24 family.</text>
</comment>
<gene>
    <name type="primary">Dhcr7</name>
</gene>
<protein>
    <recommendedName>
        <fullName evidence="6">7-dehydrocholesterol reductase</fullName>
        <shortName>7-DHC reductase</shortName>
        <ecNumber evidence="5">1.3.1.21</ecNumber>
    </recommendedName>
    <alternativeName>
        <fullName evidence="3">Cholesterol-5,6-epoxide hydrolase subunit DHCR7</fullName>
        <ecNumber evidence="3">3.3.2.11</ecNumber>
    </alternativeName>
    <alternativeName>
        <fullName evidence="7">Sterol Delta(7)-reductase</fullName>
    </alternativeName>
</protein>